<protein>
    <recommendedName>
        <fullName evidence="1">Sulfur carrier protein TusA</fullName>
    </recommendedName>
    <alternativeName>
        <fullName evidence="1">Sulfur mediator TusA</fullName>
    </alternativeName>
    <alternativeName>
        <fullName evidence="1">Sulfur transfer protein TusA</fullName>
    </alternativeName>
    <alternativeName>
        <fullName evidence="1">tRNA 2-thiouridine synthesizing protein A</fullName>
    </alternativeName>
</protein>
<proteinExistence type="inferred from homology"/>
<dbReference type="EMBL" id="CP000964">
    <property type="protein sequence ID" value="ACI09371.1"/>
    <property type="molecule type" value="Genomic_DNA"/>
</dbReference>
<dbReference type="SMR" id="B5XTL8"/>
<dbReference type="KEGG" id="kpe:KPK_0277"/>
<dbReference type="HOGENOM" id="CLU_165255_5_0_6"/>
<dbReference type="Proteomes" id="UP000001734">
    <property type="component" value="Chromosome"/>
</dbReference>
<dbReference type="GO" id="GO:0005737">
    <property type="term" value="C:cytoplasm"/>
    <property type="evidence" value="ECO:0007669"/>
    <property type="project" value="UniProtKB-SubCell"/>
</dbReference>
<dbReference type="GO" id="GO:0097163">
    <property type="term" value="F:sulfur carrier activity"/>
    <property type="evidence" value="ECO:0007669"/>
    <property type="project" value="UniProtKB-UniRule"/>
</dbReference>
<dbReference type="GO" id="GO:0002143">
    <property type="term" value="P:tRNA wobble position uridine thiolation"/>
    <property type="evidence" value="ECO:0007669"/>
    <property type="project" value="InterPro"/>
</dbReference>
<dbReference type="CDD" id="cd03423">
    <property type="entry name" value="SirA"/>
    <property type="match status" value="1"/>
</dbReference>
<dbReference type="Gene3D" id="3.30.110.40">
    <property type="entry name" value="TusA-like domain"/>
    <property type="match status" value="1"/>
</dbReference>
<dbReference type="HAMAP" id="MF_00413">
    <property type="entry name" value="Thiourid_synth_A"/>
    <property type="match status" value="1"/>
</dbReference>
<dbReference type="InterPro" id="IPR022931">
    <property type="entry name" value="Sulphur_carrier_TusA"/>
</dbReference>
<dbReference type="InterPro" id="IPR001455">
    <property type="entry name" value="TusA-like"/>
</dbReference>
<dbReference type="InterPro" id="IPR036868">
    <property type="entry name" value="TusA-like_sf"/>
</dbReference>
<dbReference type="NCBIfam" id="NF001423">
    <property type="entry name" value="PRK00299.1"/>
    <property type="match status" value="1"/>
</dbReference>
<dbReference type="PANTHER" id="PTHR33279:SF2">
    <property type="entry name" value="SULFUR CARRIER PROTEIN TUSA"/>
    <property type="match status" value="1"/>
</dbReference>
<dbReference type="PANTHER" id="PTHR33279">
    <property type="entry name" value="SULFUR CARRIER PROTEIN YEDF-RELATED"/>
    <property type="match status" value="1"/>
</dbReference>
<dbReference type="Pfam" id="PF01206">
    <property type="entry name" value="TusA"/>
    <property type="match status" value="1"/>
</dbReference>
<dbReference type="SUPFAM" id="SSF64307">
    <property type="entry name" value="SirA-like"/>
    <property type="match status" value="1"/>
</dbReference>
<dbReference type="PROSITE" id="PS01148">
    <property type="entry name" value="UPF0033"/>
    <property type="match status" value="1"/>
</dbReference>
<reference key="1">
    <citation type="journal article" date="2008" name="PLoS Genet.">
        <title>Complete genome sequence of the N2-fixing broad host range endophyte Klebsiella pneumoniae 342 and virulence predictions verified in mice.</title>
        <authorList>
            <person name="Fouts D.E."/>
            <person name="Tyler H.L."/>
            <person name="DeBoy R.T."/>
            <person name="Daugherty S."/>
            <person name="Ren Q."/>
            <person name="Badger J.H."/>
            <person name="Durkin A.S."/>
            <person name="Huot H."/>
            <person name="Shrivastava S."/>
            <person name="Kothari S."/>
            <person name="Dodson R.J."/>
            <person name="Mohamoud Y."/>
            <person name="Khouri H."/>
            <person name="Roesch L.F.W."/>
            <person name="Krogfelt K.A."/>
            <person name="Struve C."/>
            <person name="Triplett E.W."/>
            <person name="Methe B.A."/>
        </authorList>
    </citation>
    <scope>NUCLEOTIDE SEQUENCE [LARGE SCALE GENOMIC DNA]</scope>
    <source>
        <strain>342</strain>
    </source>
</reference>
<organism>
    <name type="scientific">Klebsiella pneumoniae (strain 342)</name>
    <dbReference type="NCBI Taxonomy" id="507522"/>
    <lineage>
        <taxon>Bacteria</taxon>
        <taxon>Pseudomonadati</taxon>
        <taxon>Pseudomonadota</taxon>
        <taxon>Gammaproteobacteria</taxon>
        <taxon>Enterobacterales</taxon>
        <taxon>Enterobacteriaceae</taxon>
        <taxon>Klebsiella/Raoultella group</taxon>
        <taxon>Klebsiella</taxon>
        <taxon>Klebsiella pneumoniae complex</taxon>
    </lineage>
</organism>
<gene>
    <name evidence="1" type="primary">tusA</name>
    <name type="ordered locus">KPK_0277</name>
</gene>
<evidence type="ECO:0000255" key="1">
    <source>
        <dbReference type="HAMAP-Rule" id="MF_00413"/>
    </source>
</evidence>
<accession>B5XTL8</accession>
<comment type="function">
    <text evidence="1">Sulfur carrier protein involved in sulfur trafficking in the cell. Part of a sulfur-relay system required for 2-thiolation during synthesis of 2-thiouridine of the modified wobble base 5-methylaminomethyl-2-thiouridine (mnm(5)s(2)U) in tRNA. Interacts with IscS and stimulates its cysteine desulfurase activity. Accepts an activated sulfur from IscS, which is then transferred to TusD, and thus determines the direction of sulfur flow from IscS to 2-thiouridine formation. Also appears to be involved in sulfur transfer for the biosynthesis of molybdopterin.</text>
</comment>
<comment type="pathway">
    <text evidence="1">tRNA modification.</text>
</comment>
<comment type="subunit">
    <text evidence="1">Interacts with IscS.</text>
</comment>
<comment type="subcellular location">
    <subcellularLocation>
        <location evidence="1">Cytoplasm</location>
    </subcellularLocation>
</comment>
<comment type="similarity">
    <text evidence="1">Belongs to the sulfur carrier protein TusA family.</text>
</comment>
<feature type="chain" id="PRO_1000199924" description="Sulfur carrier protein TusA">
    <location>
        <begin position="1"/>
        <end position="81"/>
    </location>
</feature>
<feature type="active site" description="Cysteine persulfide intermediate" evidence="1">
    <location>
        <position position="19"/>
    </location>
</feature>
<name>TUSA_KLEP3</name>
<sequence length="81" mass="9260">MSELFSTPDHTLDALGLRCPEPVMMVRKTVRTMPVGETLLIIADDPATTRDIPGFCRFMEHELVAQETEALPYRYLIRKSH</sequence>
<keyword id="KW-0963">Cytoplasm</keyword>
<keyword id="KW-0819">tRNA processing</keyword>